<reference key="1">
    <citation type="journal article" date="2004" name="Nature">
        <title>DNA sequence and analysis of human chromosome 9.</title>
        <authorList>
            <person name="Humphray S.J."/>
            <person name="Oliver K."/>
            <person name="Hunt A.R."/>
            <person name="Plumb R.W."/>
            <person name="Loveland J.E."/>
            <person name="Howe K.L."/>
            <person name="Andrews T.D."/>
            <person name="Searle S."/>
            <person name="Hunt S.E."/>
            <person name="Scott C.E."/>
            <person name="Jones M.C."/>
            <person name="Ainscough R."/>
            <person name="Almeida J.P."/>
            <person name="Ambrose K.D."/>
            <person name="Ashwell R.I.S."/>
            <person name="Babbage A.K."/>
            <person name="Babbage S."/>
            <person name="Bagguley C.L."/>
            <person name="Bailey J."/>
            <person name="Banerjee R."/>
            <person name="Barker D.J."/>
            <person name="Barlow K.F."/>
            <person name="Bates K."/>
            <person name="Beasley H."/>
            <person name="Beasley O."/>
            <person name="Bird C.P."/>
            <person name="Bray-Allen S."/>
            <person name="Brown A.J."/>
            <person name="Brown J.Y."/>
            <person name="Burford D."/>
            <person name="Burrill W."/>
            <person name="Burton J."/>
            <person name="Carder C."/>
            <person name="Carter N.P."/>
            <person name="Chapman J.C."/>
            <person name="Chen Y."/>
            <person name="Clarke G."/>
            <person name="Clark S.Y."/>
            <person name="Clee C.M."/>
            <person name="Clegg S."/>
            <person name="Collier R.E."/>
            <person name="Corby N."/>
            <person name="Crosier M."/>
            <person name="Cummings A.T."/>
            <person name="Davies J."/>
            <person name="Dhami P."/>
            <person name="Dunn M."/>
            <person name="Dutta I."/>
            <person name="Dyer L.W."/>
            <person name="Earthrowl M.E."/>
            <person name="Faulkner L."/>
            <person name="Fleming C.J."/>
            <person name="Frankish A."/>
            <person name="Frankland J.A."/>
            <person name="French L."/>
            <person name="Fricker D.G."/>
            <person name="Garner P."/>
            <person name="Garnett J."/>
            <person name="Ghori J."/>
            <person name="Gilbert J.G.R."/>
            <person name="Glison C."/>
            <person name="Grafham D.V."/>
            <person name="Gribble S."/>
            <person name="Griffiths C."/>
            <person name="Griffiths-Jones S."/>
            <person name="Grocock R."/>
            <person name="Guy J."/>
            <person name="Hall R.E."/>
            <person name="Hammond S."/>
            <person name="Harley J.L."/>
            <person name="Harrison E.S.I."/>
            <person name="Hart E.A."/>
            <person name="Heath P.D."/>
            <person name="Henderson C.D."/>
            <person name="Hopkins B.L."/>
            <person name="Howard P.J."/>
            <person name="Howden P.J."/>
            <person name="Huckle E."/>
            <person name="Johnson C."/>
            <person name="Johnson D."/>
            <person name="Joy A.A."/>
            <person name="Kay M."/>
            <person name="Keenan S."/>
            <person name="Kershaw J.K."/>
            <person name="Kimberley A.M."/>
            <person name="King A."/>
            <person name="Knights A."/>
            <person name="Laird G.K."/>
            <person name="Langford C."/>
            <person name="Lawlor S."/>
            <person name="Leongamornlert D.A."/>
            <person name="Leversha M."/>
            <person name="Lloyd C."/>
            <person name="Lloyd D.M."/>
            <person name="Lovell J."/>
            <person name="Martin S."/>
            <person name="Mashreghi-Mohammadi M."/>
            <person name="Matthews L."/>
            <person name="McLaren S."/>
            <person name="McLay K.E."/>
            <person name="McMurray A."/>
            <person name="Milne S."/>
            <person name="Nickerson T."/>
            <person name="Nisbett J."/>
            <person name="Nordsiek G."/>
            <person name="Pearce A.V."/>
            <person name="Peck A.I."/>
            <person name="Porter K.M."/>
            <person name="Pandian R."/>
            <person name="Pelan S."/>
            <person name="Phillimore B."/>
            <person name="Povey S."/>
            <person name="Ramsey Y."/>
            <person name="Rand V."/>
            <person name="Scharfe M."/>
            <person name="Sehra H.K."/>
            <person name="Shownkeen R."/>
            <person name="Sims S.K."/>
            <person name="Skuce C.D."/>
            <person name="Smith M."/>
            <person name="Steward C.A."/>
            <person name="Swarbreck D."/>
            <person name="Sycamore N."/>
            <person name="Tester J."/>
            <person name="Thorpe A."/>
            <person name="Tracey A."/>
            <person name="Tromans A."/>
            <person name="Thomas D.W."/>
            <person name="Wall M."/>
            <person name="Wallis J.M."/>
            <person name="West A.P."/>
            <person name="Whitehead S.L."/>
            <person name="Willey D.L."/>
            <person name="Williams S.A."/>
            <person name="Wilming L."/>
            <person name="Wray P.W."/>
            <person name="Young L."/>
            <person name="Ashurst J.L."/>
            <person name="Coulson A."/>
            <person name="Blocker H."/>
            <person name="Durbin R.M."/>
            <person name="Sulston J.E."/>
            <person name="Hubbard T."/>
            <person name="Jackson M.J."/>
            <person name="Bentley D.R."/>
            <person name="Beck S."/>
            <person name="Rogers J."/>
            <person name="Dunham I."/>
        </authorList>
    </citation>
    <scope>NUCLEOTIDE SEQUENCE [LARGE SCALE GENOMIC DNA]</scope>
</reference>
<reference key="2">
    <citation type="journal article" date="2004" name="Genome Res.">
        <title>The status, quality, and expansion of the NIH full-length cDNA project: the Mammalian Gene Collection (MGC).</title>
        <authorList>
            <consortium name="The MGC Project Team"/>
        </authorList>
    </citation>
    <scope>NUCLEOTIDE SEQUENCE [LARGE SCALE MRNA]</scope>
    <source>
        <tissue>Skin</tissue>
    </source>
</reference>
<feature type="chain" id="PRO_0000239231" description="Major facilitator superfamily domain-containing 14C pseudogene">
    <location>
        <begin position="1"/>
        <end position="150"/>
    </location>
</feature>
<feature type="topological domain" description="Extracellular" evidence="1">
    <location>
        <begin position="1"/>
        <end position="49"/>
    </location>
</feature>
<feature type="transmembrane region" description="Helical" evidence="1">
    <location>
        <begin position="50"/>
        <end position="70"/>
    </location>
</feature>
<feature type="topological domain" description="Cytoplasmic" evidence="1">
    <location>
        <begin position="71"/>
        <end position="82"/>
    </location>
</feature>
<feature type="transmembrane region" description="Helical" evidence="1">
    <location>
        <begin position="83"/>
        <end position="103"/>
    </location>
</feature>
<feature type="topological domain" description="Extracellular" evidence="1">
    <location>
        <begin position="104"/>
        <end position="111"/>
    </location>
</feature>
<feature type="transmembrane region" description="Helical" evidence="1">
    <location>
        <begin position="112"/>
        <end position="132"/>
    </location>
</feature>
<feature type="topological domain" description="Cytoplasmic" evidence="1">
    <location>
        <begin position="133"/>
        <end position="150"/>
    </location>
</feature>
<feature type="region of interest" description="Disordered" evidence="2">
    <location>
        <begin position="1"/>
        <end position="25"/>
    </location>
</feature>
<keyword id="KW-0472">Membrane</keyword>
<keyword id="KW-1185">Reference proteome</keyword>
<keyword id="KW-0812">Transmembrane</keyword>
<keyword id="KW-1133">Transmembrane helix</keyword>
<keyword id="KW-0813">Transport</keyword>
<name>MF14C_HUMAN</name>
<proteinExistence type="evidence at protein level"/>
<organism>
    <name type="scientific">Homo sapiens</name>
    <name type="common">Human</name>
    <dbReference type="NCBI Taxonomy" id="9606"/>
    <lineage>
        <taxon>Eukaryota</taxon>
        <taxon>Metazoa</taxon>
        <taxon>Chordata</taxon>
        <taxon>Craniata</taxon>
        <taxon>Vertebrata</taxon>
        <taxon>Euteleostomi</taxon>
        <taxon>Mammalia</taxon>
        <taxon>Eutheria</taxon>
        <taxon>Euarchontoglires</taxon>
        <taxon>Primates</taxon>
        <taxon>Haplorrhini</taxon>
        <taxon>Catarrhini</taxon>
        <taxon>Hominidae</taxon>
        <taxon>Homo</taxon>
    </lineage>
</organism>
<accession>Q5VZR4</accession>
<accession>Q9BSG7</accession>
<accession>R4GN14</accession>
<sequence length="150" mass="16372">MSVEPPPELEEKAASEPEAGAMPEKRAGAQAAGSTWLQGFGPPSVYHAAIVIFLEFFAWGLLTTPMLTVLHETFSQHTFLMNGLIQGVKGLLSFLSAPLIGALSDVWGRKPFLLGTVFFTCFPIPLMRISPCRVWWRAPVVPATCGRRMA</sequence>
<protein>
    <recommendedName>
        <fullName evidence="4">Major facilitator superfamily domain-containing 14C pseudogene</fullName>
    </recommendedName>
    <alternativeName>
        <fullName>Hippocampus abundant transcript-like protein 2</fullName>
    </alternativeName>
</protein>
<comment type="interaction">
    <interactant intactId="EBI-2867865">
        <id>Q5VZR4</id>
    </interactant>
    <interactant intactId="EBI-17589229">
        <id>Q6NTF9-3</id>
        <label>RHBDD2</label>
    </interactant>
    <organismsDiffer>false</organismsDiffer>
    <experiments>3</experiments>
</comment>
<comment type="subcellular location">
    <subcellularLocation>
        <location evidence="1">Membrane</location>
        <topology evidence="1">Multi-pass membrane protein</topology>
    </subcellularLocation>
</comment>
<comment type="similarity">
    <text evidence="3">Belongs to the major facilitator superfamily.</text>
</comment>
<evidence type="ECO:0000255" key="1"/>
<evidence type="ECO:0000256" key="2">
    <source>
        <dbReference type="SAM" id="MobiDB-lite"/>
    </source>
</evidence>
<evidence type="ECO:0000305" key="3"/>
<evidence type="ECO:0000312" key="4">
    <source>
        <dbReference type="HGNC" id="HGNC:23672"/>
    </source>
</evidence>
<gene>
    <name evidence="4" type="primary">MFSD14CP</name>
    <name type="synonym">HIATL2</name>
    <name type="synonym">MFSD14C</name>
</gene>
<dbReference type="EMBL" id="AL158827">
    <property type="status" value="NOT_ANNOTATED_CDS"/>
    <property type="molecule type" value="Genomic_DNA"/>
</dbReference>
<dbReference type="EMBL" id="AL445670">
    <property type="status" value="NOT_ANNOTATED_CDS"/>
    <property type="molecule type" value="Genomic_DNA"/>
</dbReference>
<dbReference type="EMBL" id="BC005058">
    <property type="status" value="NOT_ANNOTATED_CDS"/>
    <property type="molecule type" value="mRNA"/>
</dbReference>
<dbReference type="SMR" id="Q5VZR4"/>
<dbReference type="IntAct" id="Q5VZR4">
    <property type="interactions" value="2"/>
</dbReference>
<dbReference type="STRING" id="9606.ENSP00000473444"/>
<dbReference type="iPTMnet" id="Q5VZR4"/>
<dbReference type="PhosphoSitePlus" id="Q5VZR4"/>
<dbReference type="BioMuta" id="MFSD14C"/>
<dbReference type="MassIVE" id="Q5VZR4"/>
<dbReference type="PaxDb" id="9606-ENSP00000473444"/>
<dbReference type="PeptideAtlas" id="Q5VZR4"/>
<dbReference type="UCSC" id="uc004aws.3">
    <property type="organism name" value="human"/>
</dbReference>
<dbReference type="UCSC" id="uc064upl.1">
    <property type="organism name" value="human"/>
</dbReference>
<dbReference type="AGR" id="HGNC:23672"/>
<dbReference type="GeneCards" id="MFSD14CP"/>
<dbReference type="HGNC" id="HGNC:23672">
    <property type="gene designation" value="MFSD14CP"/>
</dbReference>
<dbReference type="neXtProt" id="NX_Q5VZR4"/>
<dbReference type="eggNOG" id="KOG2816">
    <property type="taxonomic scope" value="Eukaryota"/>
</dbReference>
<dbReference type="HOGENOM" id="CLU_159679_0_0_1"/>
<dbReference type="InParanoid" id="Q5VZR4"/>
<dbReference type="PAN-GO" id="Q5VZR4">
    <property type="GO annotations" value="0 GO annotations based on evolutionary models"/>
</dbReference>
<dbReference type="PhylomeDB" id="Q5VZR4"/>
<dbReference type="PathwayCommons" id="Q5VZR4"/>
<dbReference type="SignaLink" id="Q5VZR4"/>
<dbReference type="ChiTaRS" id="MFSD14C">
    <property type="organism name" value="human"/>
</dbReference>
<dbReference type="Pharos" id="Q5VZR4">
    <property type="development level" value="Tdark"/>
</dbReference>
<dbReference type="PRO" id="PR:Q5VZR4"/>
<dbReference type="Proteomes" id="UP000005640">
    <property type="component" value="Unplaced"/>
</dbReference>
<dbReference type="RNAct" id="Q5VZR4">
    <property type="molecule type" value="protein"/>
</dbReference>
<dbReference type="GO" id="GO:0016020">
    <property type="term" value="C:membrane"/>
    <property type="evidence" value="ECO:0007669"/>
    <property type="project" value="UniProtKB-SubCell"/>
</dbReference>
<dbReference type="GO" id="GO:0022857">
    <property type="term" value="F:transmembrane transporter activity"/>
    <property type="evidence" value="ECO:0007669"/>
    <property type="project" value="InterPro"/>
</dbReference>
<dbReference type="Gene3D" id="1.20.1250.20">
    <property type="entry name" value="MFS general substrate transporter like domains"/>
    <property type="match status" value="1"/>
</dbReference>
<dbReference type="InterPro" id="IPR011701">
    <property type="entry name" value="MFS"/>
</dbReference>
<dbReference type="InterPro" id="IPR020846">
    <property type="entry name" value="MFS_dom"/>
</dbReference>
<dbReference type="InterPro" id="IPR036259">
    <property type="entry name" value="MFS_trans_sf"/>
</dbReference>
<dbReference type="InterPro" id="IPR005829">
    <property type="entry name" value="Sugar_transporter_CS"/>
</dbReference>
<dbReference type="PANTHER" id="PTHR23504:SF32">
    <property type="entry name" value="HIPPOCAMPUS ABUNDANT TRANSCRIPT-LIKE PROTEIN 1"/>
    <property type="match status" value="1"/>
</dbReference>
<dbReference type="PANTHER" id="PTHR23504">
    <property type="entry name" value="MAJOR FACILITATOR SUPERFAMILY DOMAIN-CONTAINING PROTEIN 10"/>
    <property type="match status" value="1"/>
</dbReference>
<dbReference type="Pfam" id="PF07690">
    <property type="entry name" value="MFS_1"/>
    <property type="match status" value="1"/>
</dbReference>
<dbReference type="SUPFAM" id="SSF103473">
    <property type="entry name" value="MFS general substrate transporter"/>
    <property type="match status" value="1"/>
</dbReference>
<dbReference type="PROSITE" id="PS50850">
    <property type="entry name" value="MFS"/>
    <property type="match status" value="1"/>
</dbReference>
<dbReference type="PROSITE" id="PS00216">
    <property type="entry name" value="SUGAR_TRANSPORT_1"/>
    <property type="match status" value="1"/>
</dbReference>